<evidence type="ECO:0000250" key="1"/>
<evidence type="ECO:0000305" key="2"/>
<keyword id="KW-0276">Fatty acid metabolism</keyword>
<keyword id="KW-0443">Lipid metabolism</keyword>
<keyword id="KW-0521">NADP</keyword>
<keyword id="KW-0560">Oxidoreductase</keyword>
<keyword id="KW-1185">Reference proteome</keyword>
<feature type="chain" id="PRO_0000109260" description="3-hydroxybutyryl-CoA dehydrogenase">
    <location>
        <begin position="1"/>
        <end position="281"/>
    </location>
</feature>
<feature type="site" description="Important for catalytic activity" evidence="1">
    <location>
        <position position="138"/>
    </location>
</feature>
<feature type="sequence conflict" description="In Ref. 1; CAB04792/CAB07499." evidence="2" ref="1">
    <original>NLQRNVD</original>
    <variation>IYKEMLT</variation>
    <location>
        <begin position="47"/>
        <end position="53"/>
    </location>
</feature>
<feature type="sequence conflict" description="In Ref. 1; CAB04792/CAB07499." evidence="2" ref="1">
    <original>ITADEKNE</original>
    <variation>LQQMRKR</variation>
    <location>
        <begin position="57"/>
        <end position="64"/>
    </location>
</feature>
<feature type="sequence conflict" description="In Ref. 1; CAB04792/CAB07499." evidence="2" ref="1">
    <original>DGVATAED</original>
    <variation>VVLATDKS</variation>
    <location>
        <begin position="204"/>
        <end position="211"/>
    </location>
</feature>
<feature type="sequence conflict" description="In Ref. 1; CAB04792/CAB07499." evidence="2" ref="1">
    <original>D</original>
    <variation>S</variation>
    <location>
        <position position="231"/>
    </location>
</feature>
<feature type="sequence conflict" description="In Ref. 1; CAB04792/CAB07499." evidence="2" ref="1">
    <original>M</original>
    <variation>V</variation>
    <location>
        <position position="263"/>
    </location>
</feature>
<feature type="sequence conflict" description="In Ref. 1; CAB04792/CAB07499." evidence="2" ref="1">
    <original>K</original>
    <variation>KINLLRRRIS</variation>
    <location>
        <position position="281"/>
    </location>
</feature>
<protein>
    <recommendedName>
        <fullName>3-hydroxybutyryl-CoA dehydrogenase</fullName>
        <ecNumber>1.1.1.157</ecNumber>
    </recommendedName>
    <alternativeName>
        <fullName>Beta-hydroxybutyryl-CoA dehydrogenase</fullName>
        <shortName>BHBD</shortName>
    </alternativeName>
</protein>
<gene>
    <name type="primary">hbd</name>
    <name type="ordered locus">Tthe_1657</name>
</gene>
<comment type="catalytic activity">
    <reaction>
        <text>(3S)-3-hydroxybutanoyl-CoA + NADP(+) = acetoacetyl-CoA + NADPH + H(+)</text>
        <dbReference type="Rhea" id="RHEA:16197"/>
        <dbReference type="ChEBI" id="CHEBI:15378"/>
        <dbReference type="ChEBI" id="CHEBI:57286"/>
        <dbReference type="ChEBI" id="CHEBI:57316"/>
        <dbReference type="ChEBI" id="CHEBI:57783"/>
        <dbReference type="ChEBI" id="CHEBI:58349"/>
        <dbReference type="EC" id="1.1.1.157"/>
    </reaction>
</comment>
<comment type="pathway">
    <text>Lipid metabolism; butanoate metabolism.</text>
</comment>
<comment type="similarity">
    <text evidence="2">Belongs to the 3-hydroxyacyl-CoA dehydrogenase family.</text>
</comment>
<dbReference type="EC" id="1.1.1.157"/>
<dbReference type="EMBL" id="Z82038">
    <property type="protein sequence ID" value="CAB04792.1"/>
    <property type="molecule type" value="Genomic_DNA"/>
</dbReference>
<dbReference type="EMBL" id="Z92974">
    <property type="protein sequence ID" value="CAB07499.1"/>
    <property type="molecule type" value="Genomic_DNA"/>
</dbReference>
<dbReference type="EMBL" id="CP002171">
    <property type="protein sequence ID" value="ADL69166.1"/>
    <property type="molecule type" value="Genomic_DNA"/>
</dbReference>
<dbReference type="PIR" id="T45289">
    <property type="entry name" value="T45289"/>
</dbReference>
<dbReference type="RefSeq" id="WP_013298133.1">
    <property type="nucleotide sequence ID" value="NC_014410.1"/>
</dbReference>
<dbReference type="SMR" id="P77851"/>
<dbReference type="STRING" id="580327.Tthe_1657"/>
<dbReference type="GeneID" id="93864493"/>
<dbReference type="KEGG" id="ttm:Tthe_1657"/>
<dbReference type="eggNOG" id="COG1250">
    <property type="taxonomic scope" value="Bacteria"/>
</dbReference>
<dbReference type="HOGENOM" id="CLU_009834_2_0_9"/>
<dbReference type="OrthoDB" id="9815331at2"/>
<dbReference type="UniPathway" id="UPA00863"/>
<dbReference type="Proteomes" id="UP000001626">
    <property type="component" value="Chromosome"/>
</dbReference>
<dbReference type="GO" id="GO:0008691">
    <property type="term" value="F:3-hydroxybutyryl-CoA dehydrogenase activity"/>
    <property type="evidence" value="ECO:0007669"/>
    <property type="project" value="UniProtKB-EC"/>
</dbReference>
<dbReference type="GO" id="GO:0070403">
    <property type="term" value="F:NAD+ binding"/>
    <property type="evidence" value="ECO:0007669"/>
    <property type="project" value="InterPro"/>
</dbReference>
<dbReference type="GO" id="GO:0019605">
    <property type="term" value="P:butyrate metabolic process"/>
    <property type="evidence" value="ECO:0007669"/>
    <property type="project" value="UniProtKB-UniPathway"/>
</dbReference>
<dbReference type="GO" id="GO:0006635">
    <property type="term" value="P:fatty acid beta-oxidation"/>
    <property type="evidence" value="ECO:0007669"/>
    <property type="project" value="TreeGrafter"/>
</dbReference>
<dbReference type="FunFam" id="3.40.50.720:FF:000009">
    <property type="entry name" value="Fatty oxidation complex, alpha subunit"/>
    <property type="match status" value="1"/>
</dbReference>
<dbReference type="Gene3D" id="1.10.1040.10">
    <property type="entry name" value="N-(1-d-carboxylethyl)-l-norvaline Dehydrogenase, domain 2"/>
    <property type="match status" value="1"/>
</dbReference>
<dbReference type="Gene3D" id="3.40.50.720">
    <property type="entry name" value="NAD(P)-binding Rossmann-like Domain"/>
    <property type="match status" value="1"/>
</dbReference>
<dbReference type="InterPro" id="IPR022694">
    <property type="entry name" value="3-OHacyl-CoA_DH"/>
</dbReference>
<dbReference type="InterPro" id="IPR006180">
    <property type="entry name" value="3-OHacyl-CoA_DH_CS"/>
</dbReference>
<dbReference type="InterPro" id="IPR006176">
    <property type="entry name" value="3-OHacyl-CoA_DH_NAD-bd"/>
</dbReference>
<dbReference type="InterPro" id="IPR006108">
    <property type="entry name" value="3HC_DH_C"/>
</dbReference>
<dbReference type="InterPro" id="IPR008927">
    <property type="entry name" value="6-PGluconate_DH-like_C_sf"/>
</dbReference>
<dbReference type="InterPro" id="IPR013328">
    <property type="entry name" value="6PGD_dom2"/>
</dbReference>
<dbReference type="InterPro" id="IPR036291">
    <property type="entry name" value="NAD(P)-bd_dom_sf"/>
</dbReference>
<dbReference type="NCBIfam" id="NF004474">
    <property type="entry name" value="PRK05808.1"/>
    <property type="match status" value="1"/>
</dbReference>
<dbReference type="NCBIfam" id="NF005875">
    <property type="entry name" value="PRK07819.1"/>
    <property type="match status" value="1"/>
</dbReference>
<dbReference type="PANTHER" id="PTHR48075">
    <property type="entry name" value="3-HYDROXYACYL-COA DEHYDROGENASE FAMILY PROTEIN"/>
    <property type="match status" value="1"/>
</dbReference>
<dbReference type="PANTHER" id="PTHR48075:SF5">
    <property type="entry name" value="3-HYDROXYBUTYRYL-COA DEHYDROGENASE"/>
    <property type="match status" value="1"/>
</dbReference>
<dbReference type="Pfam" id="PF00725">
    <property type="entry name" value="3HCDH"/>
    <property type="match status" value="1"/>
</dbReference>
<dbReference type="Pfam" id="PF02737">
    <property type="entry name" value="3HCDH_N"/>
    <property type="match status" value="1"/>
</dbReference>
<dbReference type="PIRSF" id="PIRSF000105">
    <property type="entry name" value="HCDH"/>
    <property type="match status" value="1"/>
</dbReference>
<dbReference type="SUPFAM" id="SSF48179">
    <property type="entry name" value="6-phosphogluconate dehydrogenase C-terminal domain-like"/>
    <property type="match status" value="1"/>
</dbReference>
<dbReference type="SUPFAM" id="SSF51735">
    <property type="entry name" value="NAD(P)-binding Rossmann-fold domains"/>
    <property type="match status" value="1"/>
</dbReference>
<dbReference type="PROSITE" id="PS00067">
    <property type="entry name" value="3HCDH"/>
    <property type="match status" value="1"/>
</dbReference>
<name>HBD_THETC</name>
<sequence length="281" mass="30954">MQKICVIGAGTMGSGIAQVFAQNGFEVILRDIDMKFVEKGFGTIEKNLQRNVDKGKITADEKNEILSRIRGTTNLEDAKEADFVVEAAIENMDLKKQIFKELDEICKMETILASNTSSLSITEIASATKRPEKVIGMHFFNPVPVMKLVEVIKGLKTSEQTFNVVRELALKVDKTPIEVKEAPGFVVNRILIPMINEAIGILADGVATAEDIDEAMKLGANHPIGPLALSDLIGNDVVLAIMNVLYEEYGDSKYRPHPLLKKMVRGGLLGRKTGKGFFEYK</sequence>
<organism>
    <name type="scientific">Thermoanaerobacterium thermosaccharolyticum (strain ATCC 7956 / DSM 571 / NCIMB 9385 / NCA 3814 / NCTC 13789 / WDCM 00135 / 2032)</name>
    <name type="common">Clostridium thermosaccharolyticum</name>
    <dbReference type="NCBI Taxonomy" id="580327"/>
    <lineage>
        <taxon>Bacteria</taxon>
        <taxon>Bacillati</taxon>
        <taxon>Bacillota</taxon>
        <taxon>Clostridia</taxon>
        <taxon>Thermoanaerobacterales</taxon>
        <taxon>Thermoanaerobacteraceae</taxon>
        <taxon>Thermoanaerobacterium</taxon>
    </lineage>
</organism>
<reference key="1">
    <citation type="submission" date="1997-03" db="EMBL/GenBank/DDBJ databases">
        <authorList>
            <person name="van Rinsum A."/>
            <person name="Bronnenmeier K."/>
            <person name="Staudenbauer W."/>
        </authorList>
    </citation>
    <scope>NUCLEOTIDE SEQUENCE [GENOMIC DNA]</scope>
    <source>
        <strain>ATCC 7956 / DSM 571 / NCIMB 9385 / NCA 3814 / NCTC 13789 / WDCM 00135 / 2032</strain>
    </source>
</reference>
<reference key="2">
    <citation type="submission" date="2010-08" db="EMBL/GenBank/DDBJ databases">
        <title>Complete sequence of Thermoanaerobacterium thermosaccharolyticum DSM 571.</title>
        <authorList>
            <consortium name="US DOE Joint Genome Institute"/>
            <person name="Lucas S."/>
            <person name="Copeland A."/>
            <person name="Lapidus A."/>
            <person name="Cheng J.-F."/>
            <person name="Bruce D."/>
            <person name="Goodwin L."/>
            <person name="Pitluck S."/>
            <person name="Teshima H."/>
            <person name="Detter J.C."/>
            <person name="Han C."/>
            <person name="Tapia R."/>
            <person name="Land M."/>
            <person name="Hauser L."/>
            <person name="Chang Y.-J."/>
            <person name="Jeffries C."/>
            <person name="Kyrpides N."/>
            <person name="Ivanova N."/>
            <person name="Mikhailova N."/>
            <person name="Hemme C.L."/>
            <person name="Woyke T."/>
        </authorList>
    </citation>
    <scope>NUCLEOTIDE SEQUENCE [LARGE SCALE GENOMIC DNA]</scope>
    <source>
        <strain>ATCC 7956 / DSM 571 / NCIMB 9385 / NCA 3814 / NCTC 13789 / WDCM 00135 / 2032</strain>
    </source>
</reference>
<proteinExistence type="inferred from homology"/>
<accession>P77851</accession>
<accession>D9TPZ7</accession>
<accession>O08502</accession>